<dbReference type="EMBL" id="DQ025528">
    <property type="protein sequence ID" value="AAY42602.1"/>
    <property type="molecule type" value="mRNA"/>
</dbReference>
<dbReference type="EMBL" id="CH473948">
    <property type="protein sequence ID" value="EDM05007.1"/>
    <property type="molecule type" value="Genomic_DNA"/>
</dbReference>
<dbReference type="EMBL" id="CH473948">
    <property type="protein sequence ID" value="EDM05009.1"/>
    <property type="molecule type" value="Genomic_DNA"/>
</dbReference>
<dbReference type="EMBL" id="BC079312">
    <property type="protein sequence ID" value="AAH79312.1"/>
    <property type="molecule type" value="mRNA"/>
</dbReference>
<dbReference type="RefSeq" id="NP_001017478.1">
    <property type="nucleotide sequence ID" value="NM_001017478.1"/>
</dbReference>
<dbReference type="FunCoup" id="Q6AXU5">
    <property type="interactions" value="181"/>
</dbReference>
<dbReference type="STRING" id="10116.ENSRNOP00000037160"/>
<dbReference type="PhosphoSitePlus" id="Q6AXU5"/>
<dbReference type="PaxDb" id="10116-ENSRNOP00000037160"/>
<dbReference type="Ensembl" id="ENSRNOT00000032926.5">
    <property type="protein sequence ID" value="ENSRNOP00000037160.4"/>
    <property type="gene ID" value="ENSRNOG00000026647.5"/>
</dbReference>
<dbReference type="GeneID" id="497942"/>
<dbReference type="KEGG" id="rno:497942"/>
<dbReference type="UCSC" id="RGD:1562928">
    <property type="organism name" value="rat"/>
</dbReference>
<dbReference type="AGR" id="RGD:1562928"/>
<dbReference type="CTD" id="58191"/>
<dbReference type="RGD" id="1562928">
    <property type="gene designation" value="Cxcl16"/>
</dbReference>
<dbReference type="eggNOG" id="ENOG502T0B7">
    <property type="taxonomic scope" value="Eukaryota"/>
</dbReference>
<dbReference type="GeneTree" id="ENSGT00390000002148"/>
<dbReference type="HOGENOM" id="CLU_049889_0_0_1"/>
<dbReference type="InParanoid" id="Q6AXU5"/>
<dbReference type="OMA" id="RCNSYIR"/>
<dbReference type="OrthoDB" id="91934at9989"/>
<dbReference type="PhylomeDB" id="Q6AXU5"/>
<dbReference type="TreeFam" id="TF337941"/>
<dbReference type="Reactome" id="R-RNO-380108">
    <property type="pathway name" value="Chemokine receptors bind chemokines"/>
</dbReference>
<dbReference type="Reactome" id="R-RNO-418594">
    <property type="pathway name" value="G alpha (i) signalling events"/>
</dbReference>
<dbReference type="PRO" id="PR:Q6AXU5"/>
<dbReference type="Proteomes" id="UP000002494">
    <property type="component" value="Chromosome 10"/>
</dbReference>
<dbReference type="Proteomes" id="UP000234681">
    <property type="component" value="Chromosome 10"/>
</dbReference>
<dbReference type="Bgee" id="ENSRNOG00000026647">
    <property type="expression patterns" value="Expressed in adult mammalian kidney and 19 other cell types or tissues"/>
</dbReference>
<dbReference type="GO" id="GO:0005615">
    <property type="term" value="C:extracellular space"/>
    <property type="evidence" value="ECO:0000266"/>
    <property type="project" value="RGD"/>
</dbReference>
<dbReference type="GO" id="GO:0016020">
    <property type="term" value="C:membrane"/>
    <property type="evidence" value="ECO:0000266"/>
    <property type="project" value="RGD"/>
</dbReference>
<dbReference type="GO" id="GO:0008009">
    <property type="term" value="F:chemokine activity"/>
    <property type="evidence" value="ECO:0000266"/>
    <property type="project" value="RGD"/>
</dbReference>
<dbReference type="GO" id="GO:0042379">
    <property type="term" value="F:chemokine receptor binding"/>
    <property type="evidence" value="ECO:0000266"/>
    <property type="project" value="RGD"/>
</dbReference>
<dbReference type="GO" id="GO:0005041">
    <property type="term" value="F:low-density lipoprotein particle receptor activity"/>
    <property type="evidence" value="ECO:0000266"/>
    <property type="project" value="RGD"/>
</dbReference>
<dbReference type="GO" id="GO:0005044">
    <property type="term" value="F:scavenger receptor activity"/>
    <property type="evidence" value="ECO:0000266"/>
    <property type="project" value="RGD"/>
</dbReference>
<dbReference type="GO" id="GO:0071222">
    <property type="term" value="P:cellular response to lipopolysaccharide"/>
    <property type="evidence" value="ECO:0000266"/>
    <property type="project" value="RGD"/>
</dbReference>
<dbReference type="GO" id="GO:0030307">
    <property type="term" value="P:positive regulation of cell growth"/>
    <property type="evidence" value="ECO:0000266"/>
    <property type="project" value="RGD"/>
</dbReference>
<dbReference type="GO" id="GO:0030335">
    <property type="term" value="P:positive regulation of cell migration"/>
    <property type="evidence" value="ECO:0000266"/>
    <property type="project" value="RGD"/>
</dbReference>
<dbReference type="GO" id="GO:0006898">
    <property type="term" value="P:receptor-mediated endocytosis"/>
    <property type="evidence" value="ECO:0007669"/>
    <property type="project" value="InterPro"/>
</dbReference>
<dbReference type="GO" id="GO:0034097">
    <property type="term" value="P:response to cytokine"/>
    <property type="evidence" value="ECO:0000266"/>
    <property type="project" value="RGD"/>
</dbReference>
<dbReference type="GO" id="GO:0034612">
    <property type="term" value="P:response to tumor necrosis factor"/>
    <property type="evidence" value="ECO:0000266"/>
    <property type="project" value="RGD"/>
</dbReference>
<dbReference type="GO" id="GO:0034341">
    <property type="term" value="P:response to type II interferon"/>
    <property type="evidence" value="ECO:0000266"/>
    <property type="project" value="RGD"/>
</dbReference>
<dbReference type="GO" id="GO:0010818">
    <property type="term" value="P:T cell chemotaxis"/>
    <property type="evidence" value="ECO:0000266"/>
    <property type="project" value="RGD"/>
</dbReference>
<dbReference type="InterPro" id="IPR026296">
    <property type="entry name" value="CXCL16"/>
</dbReference>
<dbReference type="InterPro" id="IPR048585">
    <property type="entry name" value="CXCL16_dom"/>
</dbReference>
<dbReference type="PANTHER" id="PTHR14385:SF0">
    <property type="entry name" value="C-X-C MOTIF CHEMOKINE 16"/>
    <property type="match status" value="1"/>
</dbReference>
<dbReference type="PANTHER" id="PTHR14385">
    <property type="entry name" value="CXC CHEMOKINE LIGAND"/>
    <property type="match status" value="1"/>
</dbReference>
<dbReference type="Pfam" id="PF20902">
    <property type="entry name" value="CXCL16"/>
    <property type="match status" value="1"/>
</dbReference>
<comment type="function">
    <text evidence="1">Induces a strong chemotactic response. Induces calcium mobilization. Binds to CXCR6/Bonzo. Also acts as a scavenger receptor on macrophages, which specifically binds to OxLDL (oxidized low density lipoprotein), suggesting that it may be involved in pathophysiology such as atherogenesis (By similarity).</text>
</comment>
<comment type="subcellular location">
    <subcellularLocation>
        <location evidence="5">Membrane</location>
        <topology evidence="5">Single-pass type I membrane protein</topology>
    </subcellularLocation>
</comment>
<comment type="induction">
    <text evidence="4">By interleukin-18 and the induction is strongly mediated by an activator protein-1-dependent pathway.</text>
</comment>
<comment type="PTM">
    <text evidence="1">Glycosylated.</text>
</comment>
<comment type="similarity">
    <text evidence="5">Belongs to the intercrine alpha (chemokine CxC) family.</text>
</comment>
<evidence type="ECO:0000250" key="1"/>
<evidence type="ECO:0000255" key="2"/>
<evidence type="ECO:0000256" key="3">
    <source>
        <dbReference type="SAM" id="MobiDB-lite"/>
    </source>
</evidence>
<evidence type="ECO:0000269" key="4">
    <source>
    </source>
</evidence>
<evidence type="ECO:0000305" key="5"/>
<name>CXL16_RAT</name>
<accession>Q6AXU5</accession>
<protein>
    <recommendedName>
        <fullName>C-X-C motif chemokine 16</fullName>
    </recommendedName>
    <alternativeName>
        <fullName>Small-inducible cytokine B16</fullName>
    </alternativeName>
    <alternativeName>
        <fullName>Transmembrane chemokine CXCL16</fullName>
    </alternativeName>
</protein>
<gene>
    <name type="primary">Cxcl16</name>
</gene>
<feature type="signal peptide" evidence="2">
    <location>
        <begin position="1"/>
        <end position="26"/>
    </location>
</feature>
<feature type="chain" id="PRO_0000378193" description="C-X-C motif chemokine 16">
    <location>
        <begin position="27"/>
        <end position="247"/>
    </location>
</feature>
<feature type="topological domain" description="Extracellular" evidence="2">
    <location>
        <begin position="27"/>
        <end position="198"/>
    </location>
</feature>
<feature type="transmembrane region" description="Helical" evidence="2">
    <location>
        <begin position="199"/>
        <end position="219"/>
    </location>
</feature>
<feature type="topological domain" description="Cytoplasmic" evidence="2">
    <location>
        <begin position="220"/>
        <end position="247"/>
    </location>
</feature>
<feature type="region of interest" description="Disordered" evidence="3">
    <location>
        <begin position="120"/>
        <end position="152"/>
    </location>
</feature>
<feature type="compositionally biased region" description="Low complexity" evidence="3">
    <location>
        <begin position="131"/>
        <end position="147"/>
    </location>
</feature>
<feature type="disulfide bond" evidence="1">
    <location>
        <begin position="35"/>
        <end position="65"/>
    </location>
</feature>
<feature type="disulfide bond" evidence="1">
    <location>
        <begin position="37"/>
        <end position="79"/>
    </location>
</feature>
<proteinExistence type="evidence at transcript level"/>
<reference key="1">
    <citation type="journal article" date="2005" name="J. Biol. Chem.">
        <title>The pro-atherogenic cytokine interleukin-18 induces CXCL16 expression in rat aortic smooth muscle cells via MyD88, interleukin-1 receptor-associated kinase, tumor necrosis factor receptor-associated factor 6, c-Src, phosphatidylinositol 3-kinase, Akt, c-Jun N-terminal kinase, and activator protein-1 signaling.</title>
        <authorList>
            <person name="Chandrasekar B."/>
            <person name="Mummidi S."/>
            <person name="Valente A.J."/>
            <person name="Patel D.N."/>
            <person name="Bailey S.R."/>
            <person name="Freeman G.L."/>
            <person name="Hatano M."/>
            <person name="Tokuhisa T."/>
            <person name="Jensen L.E."/>
        </authorList>
    </citation>
    <scope>NUCLEOTIDE SEQUENCE [MRNA]</scope>
    <scope>INDUCTION</scope>
    <source>
        <strain>Wistar Kyoto</strain>
        <tissue>Aortic smooth muscle</tissue>
    </source>
</reference>
<reference key="2">
    <citation type="submission" date="2005-07" db="EMBL/GenBank/DDBJ databases">
        <authorList>
            <person name="Mural R.J."/>
            <person name="Adams M.D."/>
            <person name="Myers E.W."/>
            <person name="Smith H.O."/>
            <person name="Venter J.C."/>
        </authorList>
    </citation>
    <scope>NUCLEOTIDE SEQUENCE [LARGE SCALE GENOMIC DNA]</scope>
    <source>
        <strain>Brown Norway</strain>
    </source>
</reference>
<reference key="3">
    <citation type="journal article" date="2004" name="Genome Res.">
        <title>The status, quality, and expansion of the NIH full-length cDNA project: the Mammalian Gene Collection (MGC).</title>
        <authorList>
            <consortium name="The MGC Project Team"/>
        </authorList>
    </citation>
    <scope>NUCLEOTIDE SEQUENCE [LARGE SCALE MRNA]</scope>
    <source>
        <tissue>Testis</tissue>
    </source>
</reference>
<organism>
    <name type="scientific">Rattus norvegicus</name>
    <name type="common">Rat</name>
    <dbReference type="NCBI Taxonomy" id="10116"/>
    <lineage>
        <taxon>Eukaryota</taxon>
        <taxon>Metazoa</taxon>
        <taxon>Chordata</taxon>
        <taxon>Craniata</taxon>
        <taxon>Vertebrata</taxon>
        <taxon>Euteleostomi</taxon>
        <taxon>Mammalia</taxon>
        <taxon>Eutheria</taxon>
        <taxon>Euarchontoglires</taxon>
        <taxon>Glires</taxon>
        <taxon>Rodentia</taxon>
        <taxon>Myomorpha</taxon>
        <taxon>Muroidea</taxon>
        <taxon>Muridae</taxon>
        <taxon>Murinae</taxon>
        <taxon>Rattus</taxon>
    </lineage>
</organism>
<sequence>MRRGFGPLALTLFLFFFALLTLPGDGNQGSVAGSCYCDRTIPSGTQIPPATLNHMRKYLKTFHRCQFFIRFQLQSKSVCGGSQDQWVRELVNCFEHKQCGIGHGQSFHHQKHVPQASTRIPEATEGKPPDTSTAVQFQSTQQSTFPSGAPSLNKELTRHWETTILPSGYGLEARPVAEANEKQHKQQKEPGAGAGTQALVPVLSLLAIVFFLVAAMVCVLCNRRVTRQSSSGLQLCYTPVEPRPQGL</sequence>
<keyword id="KW-0145">Chemotaxis</keyword>
<keyword id="KW-0202">Cytokine</keyword>
<keyword id="KW-1015">Disulfide bond</keyword>
<keyword id="KW-0325">Glycoprotein</keyword>
<keyword id="KW-0472">Membrane</keyword>
<keyword id="KW-1185">Reference proteome</keyword>
<keyword id="KW-0732">Signal</keyword>
<keyword id="KW-0812">Transmembrane</keyword>
<keyword id="KW-1133">Transmembrane helix</keyword>